<proteinExistence type="evidence at protein level"/>
<comment type="subcellular location">
    <subcellularLocation>
        <location evidence="4">Secreted</location>
    </subcellularLocation>
</comment>
<comment type="mass spectrometry">
    <molecule>Brain peptide IDLSRFYGHFNT</molecule>
</comment>
<comment type="mass spectrometry">
    <molecule>Brain peptide IDLSRFYGHFNT</molecule>
</comment>
<comment type="mass spectrometry">
    <molecule>Brain peptide IDLSRFYGHFN</molecule>
</comment>
<comment type="mass spectrometry">
    <molecule>Brain peptide IDLSRFYGHFN</molecule>
</comment>
<comment type="mass spectrometry">
    <molecule>Brain peptide IDLSRFYGHF</molecule>
</comment>
<comment type="mass spectrometry">
    <molecule>Brain peptide IDLSRFYGHF</molecule>
</comment>
<comment type="mass spectrometry">
    <molecule>Brain peptide DLSRFYGHFNT</molecule>
</comment>
<comment type="mass spectrometry">
    <molecule>Brain peptide DLSRFYGHFN</molecule>
</comment>
<comment type="mass spectrometry">
    <molecule>Brain peptide DLSRFYGHFN</molecule>
</comment>
<comment type="mass spectrometry">
    <molecule>Brain peptide DLSRFYGHF</molecule>
</comment>
<organism>
    <name type="scientific">Apis mellifera</name>
    <name type="common">Honeybee</name>
    <dbReference type="NCBI Taxonomy" id="7460"/>
    <lineage>
        <taxon>Eukaryota</taxon>
        <taxon>Metazoa</taxon>
        <taxon>Ecdysozoa</taxon>
        <taxon>Arthropoda</taxon>
        <taxon>Hexapoda</taxon>
        <taxon>Insecta</taxon>
        <taxon>Pterygota</taxon>
        <taxon>Neoptera</taxon>
        <taxon>Endopterygota</taxon>
        <taxon>Hymenoptera</taxon>
        <taxon>Apocrita</taxon>
        <taxon>Aculeata</taxon>
        <taxon>Apoidea</taxon>
        <taxon>Anthophila</taxon>
        <taxon>Apidae</taxon>
        <taxon>Apis</taxon>
    </lineage>
</organism>
<evidence type="ECO:0000255" key="1"/>
<evidence type="ECO:0000255" key="2">
    <source>
        <dbReference type="PROSITE-ProRule" id="PRU00124"/>
    </source>
</evidence>
<evidence type="ECO:0000269" key="3">
    <source>
    </source>
</evidence>
<evidence type="ECO:0000305" key="4"/>
<dbReference type="EMBL" id="AADG06001864">
    <property type="status" value="NOT_ANNOTATED_CDS"/>
    <property type="molecule type" value="Genomic_DNA"/>
</dbReference>
<dbReference type="RefSeq" id="XP_392764.1">
    <property type="nucleotide sequence ID" value="XM_392764.7"/>
</dbReference>
<dbReference type="SMR" id="P85831"/>
<dbReference type="FunCoup" id="P85831">
    <property type="interactions" value="13"/>
</dbReference>
<dbReference type="STRING" id="7460.P85831"/>
<dbReference type="PaxDb" id="7460-GB45263-PA"/>
<dbReference type="EnsemblMetazoa" id="XM_392764">
    <property type="protein sequence ID" value="XP_392764"/>
    <property type="gene ID" value="LOC409241"/>
</dbReference>
<dbReference type="GeneID" id="409241"/>
<dbReference type="KEGG" id="ame:409241"/>
<dbReference type="eggNOG" id="ENOG502QT8V">
    <property type="taxonomic scope" value="Eukaryota"/>
</dbReference>
<dbReference type="HOGENOM" id="CLU_095820_0_0_1"/>
<dbReference type="InParanoid" id="P85831"/>
<dbReference type="OMA" id="GICISIQ"/>
<dbReference type="OrthoDB" id="6239681at2759"/>
<dbReference type="PhylomeDB" id="P85831"/>
<dbReference type="Proteomes" id="UP000005203">
    <property type="component" value="Linkage group LG11"/>
</dbReference>
<dbReference type="GO" id="GO:0005576">
    <property type="term" value="C:extracellular region"/>
    <property type="evidence" value="ECO:0007669"/>
    <property type="project" value="UniProtKB-SubCell"/>
</dbReference>
<dbReference type="CDD" id="cd00112">
    <property type="entry name" value="LDLa"/>
    <property type="match status" value="1"/>
</dbReference>
<dbReference type="Gene3D" id="2.40.128.620">
    <property type="match status" value="1"/>
</dbReference>
<dbReference type="InterPro" id="IPR053103">
    <property type="entry name" value="IDLSRF-like_peptide"/>
</dbReference>
<dbReference type="InterPro" id="IPR036055">
    <property type="entry name" value="LDL_receptor-like_sf"/>
</dbReference>
<dbReference type="InterPro" id="IPR023415">
    <property type="entry name" value="LDLR_class-A_CS"/>
</dbReference>
<dbReference type="InterPro" id="IPR002172">
    <property type="entry name" value="LDrepeatLR_classA_rpt"/>
</dbReference>
<dbReference type="PANTHER" id="PTHR20967">
    <property type="entry name" value="PROHORMONE-4"/>
    <property type="match status" value="1"/>
</dbReference>
<dbReference type="PANTHER" id="PTHR20967:SF0">
    <property type="entry name" value="PROHORMONE-4"/>
    <property type="match status" value="1"/>
</dbReference>
<dbReference type="Pfam" id="PF00057">
    <property type="entry name" value="Ldl_recept_a"/>
    <property type="match status" value="1"/>
</dbReference>
<dbReference type="SMART" id="SM00192">
    <property type="entry name" value="LDLa"/>
    <property type="match status" value="1"/>
</dbReference>
<dbReference type="SUPFAM" id="SSF57424">
    <property type="entry name" value="LDL receptor-like module"/>
    <property type="match status" value="1"/>
</dbReference>
<dbReference type="PROSITE" id="PS01209">
    <property type="entry name" value="LDLRA_1"/>
    <property type="match status" value="1"/>
</dbReference>
<dbReference type="PROSITE" id="PS50068">
    <property type="entry name" value="LDLRA_2"/>
    <property type="match status" value="1"/>
</dbReference>
<feature type="signal peptide" evidence="1">
    <location>
        <begin position="1"/>
        <end position="28"/>
    </location>
</feature>
<feature type="chain" id="PRO_0000339285" description="Prohormone-4" evidence="1">
    <location>
        <begin position="29"/>
        <end position="202"/>
    </location>
</feature>
<feature type="peptide" id="PRO_0000339286" description="Brain peptide IDLSRFYGHFNT">
    <location>
        <begin position="29"/>
        <end position="40"/>
    </location>
</feature>
<feature type="peptide" id="PRO_0000339287" description="Brain peptide IDLSRFYGHFN">
    <location>
        <begin position="29"/>
        <end position="39"/>
    </location>
</feature>
<feature type="peptide" id="PRO_0000339288" description="Brain peptide IDLSRFYGHF">
    <location>
        <begin position="29"/>
        <end position="38"/>
    </location>
</feature>
<feature type="peptide" id="PRO_0000339289" description="Brain peptide DLSRFYGHFNT">
    <location>
        <begin position="30"/>
        <end position="40"/>
    </location>
</feature>
<feature type="peptide" id="PRO_0000339290" description="Brain peptide DLSRFYGHFN">
    <location>
        <begin position="30"/>
        <end position="39"/>
    </location>
</feature>
<feature type="peptide" id="PRO_0000339291" description="Brain peptide DLSRFYGHF">
    <location>
        <begin position="30"/>
        <end position="38"/>
    </location>
</feature>
<feature type="domain" description="LDL-receptor class A" evidence="2">
    <location>
        <begin position="46"/>
        <end position="86"/>
    </location>
</feature>
<feature type="disulfide bond" evidence="2">
    <location>
        <begin position="47"/>
        <end position="61"/>
    </location>
</feature>
<feature type="disulfide bond" evidence="2">
    <location>
        <begin position="55"/>
        <end position="74"/>
    </location>
</feature>
<feature type="disulfide bond" evidence="2">
    <location>
        <begin position="68"/>
        <end position="85"/>
    </location>
</feature>
<name>PROH4_APIME</name>
<sequence>MVQRLCTSVAALSLALSACVFFPRAVMAIDLSRFYGHFNTKRSGDACRPYEPFKCPGDDTCISIQYLCDGAPDCQDGYDEDSRLCTAAKRPPVEETASFLQSLLASHGPNYLEKLFGTKARDTLKPLGGVNTVAIALSESQTIEDFGAALHLLRTDLEHLRSVFMAVENGDLGMLKSIGIKDSELGDVKFFLEKLVKTGFLD</sequence>
<protein>
    <recommendedName>
        <fullName>Prohormone-4</fullName>
    </recommendedName>
    <component>
        <recommendedName>
            <fullName>Brain peptide IDLSRFYGHFNT</fullName>
        </recommendedName>
    </component>
    <component>
        <recommendedName>
            <fullName>Brain peptide IDLSRFYGHFN</fullName>
        </recommendedName>
    </component>
    <component>
        <recommendedName>
            <fullName>Brain peptide IDLSRFYGHF</fullName>
        </recommendedName>
    </component>
    <component>
        <recommendedName>
            <fullName>Brain peptide DLSRFYGHFNT</fullName>
        </recommendedName>
    </component>
    <component>
        <recommendedName>
            <fullName>Brain peptide DLSRFYGHFN</fullName>
        </recommendedName>
    </component>
    <component>
        <recommendedName>
            <fullName>Brain peptide DLSRFYGHF</fullName>
        </recommendedName>
    </component>
</protein>
<reference evidence="4" key="1">
    <citation type="submission" date="2010-11" db="EMBL/GenBank/DDBJ databases">
        <authorList>
            <consortium name="Honey bee genome project"/>
            <person name="Zhang L."/>
            <person name="Deng J."/>
            <person name="Wu Y.-Q."/>
            <person name="Kovar C."/>
            <person name="Aqrawi P."/>
            <person name="Bandaranaike D."/>
            <person name="Blankenburg K."/>
            <person name="Chen D."/>
            <person name="Denson S."/>
            <person name="Dinh H."/>
            <person name="Firestine M."/>
            <person name="Gross S."/>
            <person name="Han Y."/>
            <person name="Hernandez B."/>
            <person name="Holder M."/>
            <person name="Jackson L."/>
            <person name="Javaid M."/>
            <person name="Jing C."/>
            <person name="Jones J."/>
            <person name="Joshi V."/>
            <person name="Kamau G."/>
            <person name="Korchina V."/>
            <person name="Lee S."/>
            <person name="Lorensuhewa L."/>
            <person name="Mata R."/>
            <person name="Mathew T."/>
            <person name="Mims S."/>
            <person name="Ngo R."/>
            <person name="Nguyen L."/>
            <person name="Okwuonu G."/>
            <person name="Ongeri F."/>
            <person name="Osuji N."/>
            <person name="Pham C."/>
            <person name="Puazo M."/>
            <person name="Qu C."/>
            <person name="Quiroz J."/>
            <person name="Raj R."/>
            <person name="Rio Deiros D."/>
            <person name="Santibanez J."/>
            <person name="Scheel M."/>
            <person name="Scherer S."/>
            <person name="Vee V."/>
            <person name="Wang M."/>
            <person name="Xin Y."/>
            <person name="Richards S."/>
            <person name="Reid J.G."/>
            <person name="Newsham I."/>
            <person name="Worley K.C."/>
            <person name="Muzny D.M."/>
            <person name="Gibbs R."/>
        </authorList>
    </citation>
    <scope>NUCLEOTIDE SEQUENCE [LARGE SCALE GENOMIC DNA]</scope>
    <source>
        <strain>DH4</strain>
    </source>
</reference>
<reference evidence="4" key="2">
    <citation type="journal article" date="2006" name="Science">
        <title>From the genome to the proteome: uncovering peptides in the Apis brain.</title>
        <authorList>
            <person name="Hummon A.B."/>
            <person name="Richmond T.A."/>
            <person name="Verleyen P."/>
            <person name="Baggerman G."/>
            <person name="Huybrechts J."/>
            <person name="Ewing M.A."/>
            <person name="Vierstraete E."/>
            <person name="Rodriguez-Zas S.L."/>
            <person name="Schoofs L."/>
            <person name="Robinson G.E."/>
            <person name="Sweedler J.V."/>
        </authorList>
    </citation>
    <scope>PROTEIN SEQUENCE OF 29-40</scope>
    <scope>MASS SPECTROMETRY</scope>
    <source>
        <tissue evidence="3">Brain</tissue>
    </source>
</reference>
<accession>P85831</accession>
<keyword id="KW-0903">Direct protein sequencing</keyword>
<keyword id="KW-1015">Disulfide bond</keyword>
<keyword id="KW-1185">Reference proteome</keyword>
<keyword id="KW-0964">Secreted</keyword>
<keyword id="KW-0732">Signal</keyword>